<protein>
    <recommendedName>
        <fullName>Dihydrolipoyl dehydrogenase, mitochondrial</fullName>
        <ecNumber>1.8.1.4</ecNumber>
    </recommendedName>
    <alternativeName>
        <fullName>Dihydrolipoamide dehydrogenase</fullName>
    </alternativeName>
    <alternativeName>
        <fullName>Glycine cleavage system L protein</fullName>
    </alternativeName>
</protein>
<comment type="catalytic activity">
    <reaction>
        <text>N(6)-[(R)-dihydrolipoyl]-L-lysyl-[protein] + NAD(+) = N(6)-[(R)-lipoyl]-L-lysyl-[protein] + NADH + H(+)</text>
        <dbReference type="Rhea" id="RHEA:15045"/>
        <dbReference type="Rhea" id="RHEA-COMP:10474"/>
        <dbReference type="Rhea" id="RHEA-COMP:10475"/>
        <dbReference type="ChEBI" id="CHEBI:15378"/>
        <dbReference type="ChEBI" id="CHEBI:57540"/>
        <dbReference type="ChEBI" id="CHEBI:57945"/>
        <dbReference type="ChEBI" id="CHEBI:83099"/>
        <dbReference type="ChEBI" id="CHEBI:83100"/>
        <dbReference type="EC" id="1.8.1.4"/>
    </reaction>
</comment>
<comment type="cofactor">
    <cofactor evidence="1">
        <name>FAD</name>
        <dbReference type="ChEBI" id="CHEBI:57692"/>
    </cofactor>
    <text evidence="1">Binds 1 FAD per subunit.</text>
</comment>
<comment type="subcellular location">
    <subcellularLocation>
        <location evidence="3">Mitochondrion matrix</location>
    </subcellularLocation>
</comment>
<comment type="miscellaneous">
    <text evidence="1">The active site is a redox-active disulfide bond.</text>
</comment>
<comment type="similarity">
    <text evidence="3">Belongs to the class-I pyridine nucleotide-disulfide oxidoreductase family.</text>
</comment>
<reference key="1">
    <citation type="journal article" date="2005" name="Nature">
        <title>The genome of the social amoeba Dictyostelium discoideum.</title>
        <authorList>
            <person name="Eichinger L."/>
            <person name="Pachebat J.A."/>
            <person name="Gloeckner G."/>
            <person name="Rajandream M.A."/>
            <person name="Sucgang R."/>
            <person name="Berriman M."/>
            <person name="Song J."/>
            <person name="Olsen R."/>
            <person name="Szafranski K."/>
            <person name="Xu Q."/>
            <person name="Tunggal B."/>
            <person name="Kummerfeld S."/>
            <person name="Madera M."/>
            <person name="Konfortov B.A."/>
            <person name="Rivero F."/>
            <person name="Bankier A.T."/>
            <person name="Lehmann R."/>
            <person name="Hamlin N."/>
            <person name="Davies R."/>
            <person name="Gaudet P."/>
            <person name="Fey P."/>
            <person name="Pilcher K."/>
            <person name="Chen G."/>
            <person name="Saunders D."/>
            <person name="Sodergren E.J."/>
            <person name="Davis P."/>
            <person name="Kerhornou A."/>
            <person name="Nie X."/>
            <person name="Hall N."/>
            <person name="Anjard C."/>
            <person name="Hemphill L."/>
            <person name="Bason N."/>
            <person name="Farbrother P."/>
            <person name="Desany B."/>
            <person name="Just E."/>
            <person name="Morio T."/>
            <person name="Rost R."/>
            <person name="Churcher C.M."/>
            <person name="Cooper J."/>
            <person name="Haydock S."/>
            <person name="van Driessche N."/>
            <person name="Cronin A."/>
            <person name="Goodhead I."/>
            <person name="Muzny D.M."/>
            <person name="Mourier T."/>
            <person name="Pain A."/>
            <person name="Lu M."/>
            <person name="Harper D."/>
            <person name="Lindsay R."/>
            <person name="Hauser H."/>
            <person name="James K.D."/>
            <person name="Quiles M."/>
            <person name="Madan Babu M."/>
            <person name="Saito T."/>
            <person name="Buchrieser C."/>
            <person name="Wardroper A."/>
            <person name="Felder M."/>
            <person name="Thangavelu M."/>
            <person name="Johnson D."/>
            <person name="Knights A."/>
            <person name="Loulseged H."/>
            <person name="Mungall K.L."/>
            <person name="Oliver K."/>
            <person name="Price C."/>
            <person name="Quail M.A."/>
            <person name="Urushihara H."/>
            <person name="Hernandez J."/>
            <person name="Rabbinowitsch E."/>
            <person name="Steffen D."/>
            <person name="Sanders M."/>
            <person name="Ma J."/>
            <person name="Kohara Y."/>
            <person name="Sharp S."/>
            <person name="Simmonds M.N."/>
            <person name="Spiegler S."/>
            <person name="Tivey A."/>
            <person name="Sugano S."/>
            <person name="White B."/>
            <person name="Walker D."/>
            <person name="Woodward J.R."/>
            <person name="Winckler T."/>
            <person name="Tanaka Y."/>
            <person name="Shaulsky G."/>
            <person name="Schleicher M."/>
            <person name="Weinstock G.M."/>
            <person name="Rosenthal A."/>
            <person name="Cox E.C."/>
            <person name="Chisholm R.L."/>
            <person name="Gibbs R.A."/>
            <person name="Loomis W.F."/>
            <person name="Platzer M."/>
            <person name="Kay R.R."/>
            <person name="Williams J.G."/>
            <person name="Dear P.H."/>
            <person name="Noegel A.A."/>
            <person name="Barrell B.G."/>
            <person name="Kuspa A."/>
        </authorList>
    </citation>
    <scope>NUCLEOTIDE SEQUENCE [LARGE SCALE GENOMIC DNA]</scope>
    <source>
        <strain>AX4</strain>
    </source>
</reference>
<reference key="2">
    <citation type="journal article" date="2004" name="Int. J. Parasitol.">
        <title>A first glimpse into the pattern and scale of gene transfer in Apicomplexa.</title>
        <authorList>
            <person name="Huang J."/>
            <person name="Mullapudi N."/>
            <person name="Sicheritz-Ponten T."/>
            <person name="Kissinger J.C."/>
        </authorList>
    </citation>
    <scope>NUCLEOTIDE SEQUENCE [GENOMIC DNA] OF 21-357</scope>
</reference>
<accession>Q54EW8</accession>
<accession>Q6S4V6</accession>
<organism>
    <name type="scientific">Dictyostelium discoideum</name>
    <name type="common">Social amoeba</name>
    <dbReference type="NCBI Taxonomy" id="44689"/>
    <lineage>
        <taxon>Eukaryota</taxon>
        <taxon>Amoebozoa</taxon>
        <taxon>Evosea</taxon>
        <taxon>Eumycetozoa</taxon>
        <taxon>Dictyostelia</taxon>
        <taxon>Dictyosteliales</taxon>
        <taxon>Dictyosteliaceae</taxon>
        <taxon>Dictyostelium</taxon>
    </lineage>
</organism>
<sequence length="488" mass="51794">MLRINRISNLRTFGQRFFSTEQQDVVVIGGGPGGYVAGIKAGQLGMKVTVVEKRGKLGGTCLNVGCIPSKALLNASHLYEEATTKMSKYGVKCSGVELDLGAMMQYKDKSVSGLTSGIEGLFKKNKVKYDKGFGKITGPNTVEVTLNDGSVKTIETKNIVIATGSEVTSLPNVNIDEESIISSTGALALKSVPKKLIVIGGGVIGLELGSVWSRLGSETTVVEFTNRIAAGADGEVAKKFQKSLEKQHMKFHLETKVTSVVKKSDGKVTVTVEQVGAGGFTGTLEADAVLVSVGRRPNTSGLGLESVGIPTDKAGRVEVGDHFNTKVPSIFAIGDAIRGPMLAHKAEEEGIAIIEQIHNGGGHVNYGAIPSIIYTHPEVAWVGKTEEELQKEGIQYNIGRFPFVANSRAKTNDDVEGFVKFLAAKDSDRVLGAHIMGTNAGELIGECVLAMEYGASCEDIARTCHGHPTLSEAVKEAAMDAYDKPIHM</sequence>
<gene>
    <name type="primary">lpd</name>
    <name type="synonym">bkdD</name>
    <name type="synonym">dld</name>
    <name type="synonym">odhC</name>
    <name type="synonym">pdhD</name>
    <name type="ORF">DDB_G0291648</name>
</gene>
<keyword id="KW-1015">Disulfide bond</keyword>
<keyword id="KW-0274">FAD</keyword>
<keyword id="KW-0285">Flavoprotein</keyword>
<keyword id="KW-0496">Mitochondrion</keyword>
<keyword id="KW-0520">NAD</keyword>
<keyword id="KW-0560">Oxidoreductase</keyword>
<keyword id="KW-0676">Redox-active center</keyword>
<keyword id="KW-1185">Reference proteome</keyword>
<keyword id="KW-0809">Transit peptide</keyword>
<name>DLDH_DICDI</name>
<evidence type="ECO:0000250" key="1"/>
<evidence type="ECO:0000255" key="2"/>
<evidence type="ECO:0000305" key="3"/>
<dbReference type="EC" id="1.8.1.4"/>
<dbReference type="EMBL" id="AAFI02000177">
    <property type="protein sequence ID" value="EAL61808.1"/>
    <property type="molecule type" value="Genomic_DNA"/>
</dbReference>
<dbReference type="EMBL" id="AY466389">
    <property type="protein sequence ID" value="AAS47709.1"/>
    <property type="molecule type" value="Genomic_DNA"/>
</dbReference>
<dbReference type="RefSeq" id="XP_635122.1">
    <property type="nucleotide sequence ID" value="XM_630030.1"/>
</dbReference>
<dbReference type="SMR" id="Q54EW8"/>
<dbReference type="FunCoup" id="Q54EW8">
    <property type="interactions" value="716"/>
</dbReference>
<dbReference type="STRING" id="44689.Q54EW8"/>
<dbReference type="PaxDb" id="44689-DDB0216232"/>
<dbReference type="EnsemblProtists" id="EAL61808">
    <property type="protein sequence ID" value="EAL61808"/>
    <property type="gene ID" value="DDB_G0291648"/>
</dbReference>
<dbReference type="GeneID" id="8628069"/>
<dbReference type="KEGG" id="ddi:DDB_G0291648"/>
<dbReference type="dictyBase" id="DDB_G0291648">
    <property type="gene designation" value="lpd"/>
</dbReference>
<dbReference type="VEuPathDB" id="AmoebaDB:DDB_G0291648"/>
<dbReference type="eggNOG" id="KOG1335">
    <property type="taxonomic scope" value="Eukaryota"/>
</dbReference>
<dbReference type="HOGENOM" id="CLU_016755_0_1_1"/>
<dbReference type="InParanoid" id="Q54EW8"/>
<dbReference type="OMA" id="CAQLGMK"/>
<dbReference type="PhylomeDB" id="Q54EW8"/>
<dbReference type="Reactome" id="R-DDI-6783984">
    <property type="pathway name" value="Glycine degradation"/>
</dbReference>
<dbReference type="Reactome" id="R-DDI-9853506">
    <property type="pathway name" value="OGDH complex synthesizes succinyl-CoA from 2-OG"/>
</dbReference>
<dbReference type="Reactome" id="R-DDI-9858328">
    <property type="pathway name" value="OADH complex synthesizes glutaryl-CoA from 2-OA"/>
</dbReference>
<dbReference type="Reactome" id="R-DDI-9859138">
    <property type="pathway name" value="BCKDH synthesizes BCAA-CoA from KIC, KMVA, KIV"/>
</dbReference>
<dbReference type="Reactome" id="R-DDI-9861559">
    <property type="pathway name" value="PDH complex synthesizes acetyl-CoA from PYR"/>
</dbReference>
<dbReference type="PRO" id="PR:Q54EW8"/>
<dbReference type="Proteomes" id="UP000002195">
    <property type="component" value="Chromosome 6"/>
</dbReference>
<dbReference type="GO" id="GO:0031012">
    <property type="term" value="C:extracellular matrix"/>
    <property type="evidence" value="ECO:0007005"/>
    <property type="project" value="dictyBase"/>
</dbReference>
<dbReference type="GO" id="GO:0005759">
    <property type="term" value="C:mitochondrial matrix"/>
    <property type="evidence" value="ECO:0000250"/>
    <property type="project" value="dictyBase"/>
</dbReference>
<dbReference type="GO" id="GO:0005739">
    <property type="term" value="C:mitochondrion"/>
    <property type="evidence" value="ECO:0000318"/>
    <property type="project" value="GO_Central"/>
</dbReference>
<dbReference type="GO" id="GO:0045252">
    <property type="term" value="C:oxoglutarate dehydrogenase complex"/>
    <property type="evidence" value="ECO:0000318"/>
    <property type="project" value="GO_Central"/>
</dbReference>
<dbReference type="GO" id="GO:0045335">
    <property type="term" value="C:phagocytic vesicle"/>
    <property type="evidence" value="ECO:0007005"/>
    <property type="project" value="dictyBase"/>
</dbReference>
<dbReference type="GO" id="GO:0045254">
    <property type="term" value="C:pyruvate dehydrogenase complex"/>
    <property type="evidence" value="ECO:0000250"/>
    <property type="project" value="dictyBase"/>
</dbReference>
<dbReference type="GO" id="GO:0004148">
    <property type="term" value="F:dihydrolipoyl dehydrogenase (NADH) activity"/>
    <property type="evidence" value="ECO:0000250"/>
    <property type="project" value="dictyBase"/>
</dbReference>
<dbReference type="GO" id="GO:0050660">
    <property type="term" value="F:flavin adenine dinucleotide binding"/>
    <property type="evidence" value="ECO:0000318"/>
    <property type="project" value="GO_Central"/>
</dbReference>
<dbReference type="GO" id="GO:0006103">
    <property type="term" value="P:2-oxoglutarate metabolic process"/>
    <property type="evidence" value="ECO:0000318"/>
    <property type="project" value="GO_Central"/>
</dbReference>
<dbReference type="GO" id="GO:0006546">
    <property type="term" value="P:glycine catabolic process"/>
    <property type="evidence" value="ECO:0000250"/>
    <property type="project" value="dictyBase"/>
</dbReference>
<dbReference type="GO" id="GO:0006550">
    <property type="term" value="P:isoleucine catabolic process"/>
    <property type="evidence" value="ECO:0000250"/>
    <property type="project" value="dictyBase"/>
</dbReference>
<dbReference type="GO" id="GO:0006552">
    <property type="term" value="P:L-leucine catabolic process"/>
    <property type="evidence" value="ECO:0000250"/>
    <property type="project" value="dictyBase"/>
</dbReference>
<dbReference type="GO" id="GO:0006564">
    <property type="term" value="P:L-serine biosynthetic process"/>
    <property type="evidence" value="ECO:0000250"/>
    <property type="project" value="dictyBase"/>
</dbReference>
<dbReference type="GO" id="GO:0006090">
    <property type="term" value="P:pyruvate metabolic process"/>
    <property type="evidence" value="ECO:0000318"/>
    <property type="project" value="GO_Central"/>
</dbReference>
<dbReference type="GO" id="GO:0006574">
    <property type="term" value="P:valine catabolic process"/>
    <property type="evidence" value="ECO:0000250"/>
    <property type="project" value="dictyBase"/>
</dbReference>
<dbReference type="FunFam" id="3.30.390.30:FF:000001">
    <property type="entry name" value="Dihydrolipoyl dehydrogenase"/>
    <property type="match status" value="1"/>
</dbReference>
<dbReference type="FunFam" id="3.50.50.60:FF:000001">
    <property type="entry name" value="Dihydrolipoyl dehydrogenase, mitochondrial"/>
    <property type="match status" value="1"/>
</dbReference>
<dbReference type="Gene3D" id="3.30.390.30">
    <property type="match status" value="1"/>
</dbReference>
<dbReference type="Gene3D" id="3.50.50.60">
    <property type="entry name" value="FAD/NAD(P)-binding domain"/>
    <property type="match status" value="2"/>
</dbReference>
<dbReference type="InterPro" id="IPR050151">
    <property type="entry name" value="Class-I_Pyr_Nuc-Dis_Oxidored"/>
</dbReference>
<dbReference type="InterPro" id="IPR036188">
    <property type="entry name" value="FAD/NAD-bd_sf"/>
</dbReference>
<dbReference type="InterPro" id="IPR023753">
    <property type="entry name" value="FAD/NAD-binding_dom"/>
</dbReference>
<dbReference type="InterPro" id="IPR016156">
    <property type="entry name" value="FAD/NAD-linked_Rdtase_dimer_sf"/>
</dbReference>
<dbReference type="InterPro" id="IPR006258">
    <property type="entry name" value="Lipoamide_DH"/>
</dbReference>
<dbReference type="InterPro" id="IPR001100">
    <property type="entry name" value="Pyr_nuc-diS_OxRdtase"/>
</dbReference>
<dbReference type="InterPro" id="IPR004099">
    <property type="entry name" value="Pyr_nucl-diS_OxRdtase_dimer"/>
</dbReference>
<dbReference type="InterPro" id="IPR012999">
    <property type="entry name" value="Pyr_OxRdtase_I_AS"/>
</dbReference>
<dbReference type="NCBIfam" id="TIGR01350">
    <property type="entry name" value="lipoamide_DH"/>
    <property type="match status" value="1"/>
</dbReference>
<dbReference type="PANTHER" id="PTHR22912:SF151">
    <property type="entry name" value="DIHYDROLIPOYL DEHYDROGENASE, MITOCHONDRIAL"/>
    <property type="match status" value="1"/>
</dbReference>
<dbReference type="PANTHER" id="PTHR22912">
    <property type="entry name" value="DISULFIDE OXIDOREDUCTASE"/>
    <property type="match status" value="1"/>
</dbReference>
<dbReference type="Pfam" id="PF07992">
    <property type="entry name" value="Pyr_redox_2"/>
    <property type="match status" value="1"/>
</dbReference>
<dbReference type="Pfam" id="PF02852">
    <property type="entry name" value="Pyr_redox_dim"/>
    <property type="match status" value="1"/>
</dbReference>
<dbReference type="PIRSF" id="PIRSF000350">
    <property type="entry name" value="Mercury_reductase_MerA"/>
    <property type="match status" value="1"/>
</dbReference>
<dbReference type="PRINTS" id="PR00368">
    <property type="entry name" value="FADPNR"/>
</dbReference>
<dbReference type="PRINTS" id="PR00411">
    <property type="entry name" value="PNDRDTASEI"/>
</dbReference>
<dbReference type="SUPFAM" id="SSF51905">
    <property type="entry name" value="FAD/NAD(P)-binding domain"/>
    <property type="match status" value="1"/>
</dbReference>
<dbReference type="SUPFAM" id="SSF55424">
    <property type="entry name" value="FAD/NAD-linked reductases, dimerisation (C-terminal) domain"/>
    <property type="match status" value="1"/>
</dbReference>
<dbReference type="PROSITE" id="PS00076">
    <property type="entry name" value="PYRIDINE_REDOX_1"/>
    <property type="match status" value="1"/>
</dbReference>
<feature type="transit peptide" description="Mitochondrion" evidence="2">
    <location>
        <begin position="1"/>
        <end position="25"/>
    </location>
</feature>
<feature type="chain" id="PRO_0000327450" description="Dihydrolipoyl dehydrogenase, mitochondrial">
    <location>
        <begin position="26"/>
        <end position="488"/>
    </location>
</feature>
<feature type="active site" description="Proton acceptor" evidence="1">
    <location>
        <position position="467"/>
    </location>
</feature>
<feature type="binding site" evidence="1">
    <location>
        <begin position="52"/>
        <end position="61"/>
    </location>
    <ligand>
        <name>FAD</name>
        <dbReference type="ChEBI" id="CHEBI:57692"/>
    </ligand>
</feature>
<feature type="binding site" evidence="1">
    <location>
        <position position="70"/>
    </location>
    <ligand>
        <name>FAD</name>
        <dbReference type="ChEBI" id="CHEBI:57692"/>
    </ligand>
</feature>
<feature type="binding site" evidence="1">
    <location>
        <position position="134"/>
    </location>
    <ligand>
        <name>FAD</name>
        <dbReference type="ChEBI" id="CHEBI:57692"/>
    </ligand>
</feature>
<feature type="binding site" evidence="1">
    <location>
        <begin position="163"/>
        <end position="165"/>
    </location>
    <ligand>
        <name>FAD</name>
        <dbReference type="ChEBI" id="CHEBI:57692"/>
    </ligand>
</feature>
<feature type="binding site" evidence="1">
    <location>
        <begin position="200"/>
        <end position="207"/>
    </location>
    <ligand>
        <name>NAD(+)</name>
        <dbReference type="ChEBI" id="CHEBI:57540"/>
    </ligand>
</feature>
<feature type="binding site" evidence="1">
    <location>
        <position position="223"/>
    </location>
    <ligand>
        <name>NAD(+)</name>
        <dbReference type="ChEBI" id="CHEBI:57540"/>
    </ligand>
</feature>
<feature type="binding site" evidence="1">
    <location>
        <position position="257"/>
    </location>
    <ligand>
        <name>NAD(+)</name>
        <dbReference type="ChEBI" id="CHEBI:57540"/>
    </ligand>
</feature>
<feature type="binding site" evidence="1">
    <location>
        <position position="294"/>
    </location>
    <ligand>
        <name>NAD(+)</name>
        <dbReference type="ChEBI" id="CHEBI:57540"/>
    </ligand>
</feature>
<feature type="binding site" evidence="1">
    <location>
        <position position="335"/>
    </location>
    <ligand>
        <name>FAD</name>
        <dbReference type="ChEBI" id="CHEBI:57692"/>
    </ligand>
</feature>
<feature type="binding site" evidence="1">
    <location>
        <begin position="341"/>
        <end position="344"/>
    </location>
    <ligand>
        <name>FAD</name>
        <dbReference type="ChEBI" id="CHEBI:57692"/>
    </ligand>
</feature>
<feature type="disulfide bond" description="Redox-active" evidence="1">
    <location>
        <begin position="61"/>
        <end position="66"/>
    </location>
</feature>
<proteinExistence type="inferred from homology"/>